<organism>
    <name type="scientific">Buchnera aphidicola subsp. Acyrthosiphon pisum (strain Tuc7)</name>
    <dbReference type="NCBI Taxonomy" id="561501"/>
    <lineage>
        <taxon>Bacteria</taxon>
        <taxon>Pseudomonadati</taxon>
        <taxon>Pseudomonadota</taxon>
        <taxon>Gammaproteobacteria</taxon>
        <taxon>Enterobacterales</taxon>
        <taxon>Erwiniaceae</taxon>
        <taxon>Buchnera</taxon>
    </lineage>
</organism>
<sequence length="512" mass="56648">MRLNSTEISKLIKERIAQFEVFNQSYNEGSIISVSDGIIKINGLSNVMLGEMILLPNNEYAIALNIERDTVGAVVMGPYIHISEGAKVRCTGKILEVPVGDNFLGRVVNALGFPIDGKDSIQNDGFFPVEADAPGVIDRKSVNQPIQTGYKVIDSMIPIGRGQRELIIGDRQTGKTALAIDTIINQKQSGIKCIYVAIGQKLSTIINVVKKLEENNALFNTIIVVASASEAASLQYLAPYSGCAMAEFFRNKGEDSLIIYDDLSKHAVAYRQISLLLRRPPGREAFPGDIFYLHSRLLERASRVSMEYVQKITKNKITGKTGSITALPIIETQSGDVSAFVPTNVISITDGQIFLESNLFNSGIRPAVNPGISVSRVGSAAQTTIIKKLSSGIRTALAQYQELAAFSQFSSDLDDTTRKQLNHGQKITELLKQKQYSPISIAEQALILFVAENNFLDDISIDKITKFEKEILIYAHNYYFDLMEEINKIGDFNIVIKDKFIKLITEFKKNQF</sequence>
<gene>
    <name evidence="1" type="primary">atpA</name>
    <name type="ordered locus">BUAPTUC7_006</name>
</gene>
<dbReference type="EC" id="7.1.2.2" evidence="1"/>
<dbReference type="EMBL" id="CP001158">
    <property type="protein sequence ID" value="ACL29840.1"/>
    <property type="molecule type" value="Genomic_DNA"/>
</dbReference>
<dbReference type="RefSeq" id="WP_012619399.1">
    <property type="nucleotide sequence ID" value="NC_011834.1"/>
</dbReference>
<dbReference type="SMR" id="B8D6S5"/>
<dbReference type="KEGG" id="bau:BUAPTUC7_006"/>
<dbReference type="HOGENOM" id="CLU_010091_2_1_6"/>
<dbReference type="GO" id="GO:0005886">
    <property type="term" value="C:plasma membrane"/>
    <property type="evidence" value="ECO:0007669"/>
    <property type="project" value="UniProtKB-SubCell"/>
</dbReference>
<dbReference type="GO" id="GO:0045259">
    <property type="term" value="C:proton-transporting ATP synthase complex"/>
    <property type="evidence" value="ECO:0007669"/>
    <property type="project" value="UniProtKB-KW"/>
</dbReference>
<dbReference type="GO" id="GO:0043531">
    <property type="term" value="F:ADP binding"/>
    <property type="evidence" value="ECO:0007669"/>
    <property type="project" value="TreeGrafter"/>
</dbReference>
<dbReference type="GO" id="GO:0005524">
    <property type="term" value="F:ATP binding"/>
    <property type="evidence" value="ECO:0007669"/>
    <property type="project" value="UniProtKB-UniRule"/>
</dbReference>
<dbReference type="GO" id="GO:0046933">
    <property type="term" value="F:proton-transporting ATP synthase activity, rotational mechanism"/>
    <property type="evidence" value="ECO:0007669"/>
    <property type="project" value="UniProtKB-UniRule"/>
</dbReference>
<dbReference type="CDD" id="cd18113">
    <property type="entry name" value="ATP-synt_F1_alpha_C"/>
    <property type="match status" value="1"/>
</dbReference>
<dbReference type="CDD" id="cd18116">
    <property type="entry name" value="ATP-synt_F1_alpha_N"/>
    <property type="match status" value="1"/>
</dbReference>
<dbReference type="CDD" id="cd01132">
    <property type="entry name" value="F1-ATPase_alpha_CD"/>
    <property type="match status" value="1"/>
</dbReference>
<dbReference type="FunFam" id="1.20.150.20:FF:000001">
    <property type="entry name" value="ATP synthase subunit alpha"/>
    <property type="match status" value="1"/>
</dbReference>
<dbReference type="FunFam" id="2.40.30.20:FF:000001">
    <property type="entry name" value="ATP synthase subunit alpha"/>
    <property type="match status" value="1"/>
</dbReference>
<dbReference type="FunFam" id="3.40.50.300:FF:000002">
    <property type="entry name" value="ATP synthase subunit alpha"/>
    <property type="match status" value="1"/>
</dbReference>
<dbReference type="Gene3D" id="2.40.30.20">
    <property type="match status" value="1"/>
</dbReference>
<dbReference type="Gene3D" id="1.20.150.20">
    <property type="entry name" value="ATP synthase alpha/beta chain, C-terminal domain"/>
    <property type="match status" value="1"/>
</dbReference>
<dbReference type="Gene3D" id="3.40.50.300">
    <property type="entry name" value="P-loop containing nucleotide triphosphate hydrolases"/>
    <property type="match status" value="1"/>
</dbReference>
<dbReference type="HAMAP" id="MF_01346">
    <property type="entry name" value="ATP_synth_alpha_bact"/>
    <property type="match status" value="1"/>
</dbReference>
<dbReference type="InterPro" id="IPR023366">
    <property type="entry name" value="ATP_synth_asu-like_sf"/>
</dbReference>
<dbReference type="InterPro" id="IPR000793">
    <property type="entry name" value="ATP_synth_asu_C"/>
</dbReference>
<dbReference type="InterPro" id="IPR038376">
    <property type="entry name" value="ATP_synth_asu_C_sf"/>
</dbReference>
<dbReference type="InterPro" id="IPR033732">
    <property type="entry name" value="ATP_synth_F1_a_nt-bd_dom"/>
</dbReference>
<dbReference type="InterPro" id="IPR005294">
    <property type="entry name" value="ATP_synth_F1_asu"/>
</dbReference>
<dbReference type="InterPro" id="IPR020003">
    <property type="entry name" value="ATPase_a/bsu_AS"/>
</dbReference>
<dbReference type="InterPro" id="IPR004100">
    <property type="entry name" value="ATPase_F1/V1/A1_a/bsu_N"/>
</dbReference>
<dbReference type="InterPro" id="IPR036121">
    <property type="entry name" value="ATPase_F1/V1/A1_a/bsu_N_sf"/>
</dbReference>
<dbReference type="InterPro" id="IPR000194">
    <property type="entry name" value="ATPase_F1/V1/A1_a/bsu_nucl-bd"/>
</dbReference>
<dbReference type="InterPro" id="IPR027417">
    <property type="entry name" value="P-loop_NTPase"/>
</dbReference>
<dbReference type="NCBIfam" id="TIGR00962">
    <property type="entry name" value="atpA"/>
    <property type="match status" value="1"/>
</dbReference>
<dbReference type="NCBIfam" id="NF009884">
    <property type="entry name" value="PRK13343.1"/>
    <property type="match status" value="1"/>
</dbReference>
<dbReference type="PANTHER" id="PTHR48082">
    <property type="entry name" value="ATP SYNTHASE SUBUNIT ALPHA, MITOCHONDRIAL"/>
    <property type="match status" value="1"/>
</dbReference>
<dbReference type="PANTHER" id="PTHR48082:SF2">
    <property type="entry name" value="ATP SYNTHASE SUBUNIT ALPHA, MITOCHONDRIAL"/>
    <property type="match status" value="1"/>
</dbReference>
<dbReference type="Pfam" id="PF00006">
    <property type="entry name" value="ATP-synt_ab"/>
    <property type="match status" value="1"/>
</dbReference>
<dbReference type="Pfam" id="PF00306">
    <property type="entry name" value="ATP-synt_ab_C"/>
    <property type="match status" value="1"/>
</dbReference>
<dbReference type="Pfam" id="PF02874">
    <property type="entry name" value="ATP-synt_ab_N"/>
    <property type="match status" value="1"/>
</dbReference>
<dbReference type="SUPFAM" id="SSF47917">
    <property type="entry name" value="C-terminal domain of alpha and beta subunits of F1 ATP synthase"/>
    <property type="match status" value="1"/>
</dbReference>
<dbReference type="SUPFAM" id="SSF50615">
    <property type="entry name" value="N-terminal domain of alpha and beta subunits of F1 ATP synthase"/>
    <property type="match status" value="1"/>
</dbReference>
<dbReference type="SUPFAM" id="SSF52540">
    <property type="entry name" value="P-loop containing nucleoside triphosphate hydrolases"/>
    <property type="match status" value="1"/>
</dbReference>
<dbReference type="PROSITE" id="PS00152">
    <property type="entry name" value="ATPASE_ALPHA_BETA"/>
    <property type="match status" value="1"/>
</dbReference>
<protein>
    <recommendedName>
        <fullName evidence="1">ATP synthase subunit alpha</fullName>
        <ecNumber evidence="1">7.1.2.2</ecNumber>
    </recommendedName>
    <alternativeName>
        <fullName evidence="1">ATP synthase F1 sector subunit alpha</fullName>
    </alternativeName>
    <alternativeName>
        <fullName evidence="1">F-ATPase subunit alpha</fullName>
    </alternativeName>
</protein>
<proteinExistence type="inferred from homology"/>
<evidence type="ECO:0000255" key="1">
    <source>
        <dbReference type="HAMAP-Rule" id="MF_01346"/>
    </source>
</evidence>
<name>ATPA_BUCAT</name>
<keyword id="KW-0066">ATP synthesis</keyword>
<keyword id="KW-0067">ATP-binding</keyword>
<keyword id="KW-1003">Cell membrane</keyword>
<keyword id="KW-0139">CF(1)</keyword>
<keyword id="KW-0375">Hydrogen ion transport</keyword>
<keyword id="KW-0406">Ion transport</keyword>
<keyword id="KW-0472">Membrane</keyword>
<keyword id="KW-0547">Nucleotide-binding</keyword>
<keyword id="KW-1278">Translocase</keyword>
<keyword id="KW-0813">Transport</keyword>
<reference key="1">
    <citation type="journal article" date="2009" name="Science">
        <title>The dynamics and time scale of ongoing genomic erosion in symbiotic bacteria.</title>
        <authorList>
            <person name="Moran N.A."/>
            <person name="McLaughlin H.J."/>
            <person name="Sorek R."/>
        </authorList>
    </citation>
    <scope>NUCLEOTIDE SEQUENCE [LARGE SCALE GENOMIC DNA]</scope>
    <source>
        <strain>Tuc7</strain>
    </source>
</reference>
<feature type="chain" id="PRO_1000166526" description="ATP synthase subunit alpha">
    <location>
        <begin position="1"/>
        <end position="512"/>
    </location>
</feature>
<feature type="binding site" evidence="1">
    <location>
        <begin position="169"/>
        <end position="176"/>
    </location>
    <ligand>
        <name>ATP</name>
        <dbReference type="ChEBI" id="CHEBI:30616"/>
    </ligand>
</feature>
<feature type="site" description="Required for activity" evidence="1">
    <location>
        <position position="373"/>
    </location>
</feature>
<accession>B8D6S5</accession>
<comment type="function">
    <text evidence="1">Produces ATP from ADP in the presence of a proton gradient across the membrane. The alpha chain is a regulatory subunit.</text>
</comment>
<comment type="catalytic activity">
    <reaction evidence="1">
        <text>ATP + H2O + 4 H(+)(in) = ADP + phosphate + 5 H(+)(out)</text>
        <dbReference type="Rhea" id="RHEA:57720"/>
        <dbReference type="ChEBI" id="CHEBI:15377"/>
        <dbReference type="ChEBI" id="CHEBI:15378"/>
        <dbReference type="ChEBI" id="CHEBI:30616"/>
        <dbReference type="ChEBI" id="CHEBI:43474"/>
        <dbReference type="ChEBI" id="CHEBI:456216"/>
        <dbReference type="EC" id="7.1.2.2"/>
    </reaction>
</comment>
<comment type="subunit">
    <text evidence="1">F-type ATPases have 2 components, CF(1) - the catalytic core - and CF(0) - the membrane proton channel. CF(1) has five subunits: alpha(3), beta(3), gamma(1), delta(1), epsilon(1). CF(0) has three main subunits: a(1), b(2) and c(9-12). The alpha and beta chains form an alternating ring which encloses part of the gamma chain. CF(1) is attached to CF(0) by a central stalk formed by the gamma and epsilon chains, while a peripheral stalk is formed by the delta and b chains.</text>
</comment>
<comment type="subcellular location">
    <subcellularLocation>
        <location evidence="1">Cell membrane</location>
        <topology evidence="1">Peripheral membrane protein</topology>
    </subcellularLocation>
</comment>
<comment type="similarity">
    <text evidence="1">Belongs to the ATPase alpha/beta chains family.</text>
</comment>